<protein>
    <recommendedName>
        <fullName>Two pore calcium channel protein 1</fullName>
    </recommendedName>
    <alternativeName>
        <fullName>Calcium channel protein 1</fullName>
        <shortName>AtCCH1</shortName>
    </alternativeName>
    <alternativeName>
        <fullName>Fatty acid oxygenation up-regulated protein 2</fullName>
    </alternativeName>
    <alternativeName>
        <fullName>Voltage-dependent calcium channel protein TPC1</fullName>
        <shortName>AtTPC1</shortName>
    </alternativeName>
</protein>
<sequence length="733" mass="84873">MEDPLIGRDSLGGGGTDRVRRSEAITHGTPFQKAAALVDLAEDGIGLPVEILDQSSFGESARYYFIFTRLDLIWSLNYFALLFLNFFEQPLWCEKNPKPSCKDRDYYYLGELPYLTNAESIIYEVITLAILLVHTFFPISYEGSRIFWTSRLNLVKVACVVILFVDVLVDFLYLSPLAFDFLPFRIAPYVRVIIFILSIRELRDTLVLLSGMLGTYLNILALWMLFLLFASWIAFVMFEDTQQGLTVFTSYGATLYQMFILFTTSNNPDVWIPAYKSSRWSSVFFVLYVLIGVYFVTNLILAVVYDSFKEQLAKQVSGMDQMKRRMLEKAFGLIDSDKNGEIDKNQCIKLFEQLTNYRTLPKISKEEFGLIFDELDDTRDFKINKDEFADLCQAIALRFQKEEVPSLFEHFPQIYHSALSQQLRAFVRSPNFGYAISFILIINFIAVVVETTLDIEESSAQKPWQVAEFVFGWIYVLEMALKIYTYGFENYWREGANRFDFLVTWVIVIGETATFITPDENTFFSNGEWIRYLLLARMLRLIRLLMNVQRYRAFIATFITLIPSLMPYLGTIFCVLCIYCSIGVQVFGGLVNAGNKKLFETELAEDDYLLFNFNDYPNGMVTLFNLLVMGNWQVWMESYKDLTGTWWSITYFVSFYVITILLLLNLVVAFVLEAFFTELDLEEEEKCQGQDSQEKRNRRRSAGSKSRSQRVDTLLHHMLGDELSKPECSTSDT</sequence>
<organism>
    <name type="scientific">Arabidopsis thaliana</name>
    <name type="common">Mouse-ear cress</name>
    <dbReference type="NCBI Taxonomy" id="3702"/>
    <lineage>
        <taxon>Eukaryota</taxon>
        <taxon>Viridiplantae</taxon>
        <taxon>Streptophyta</taxon>
        <taxon>Embryophyta</taxon>
        <taxon>Tracheophyta</taxon>
        <taxon>Spermatophyta</taxon>
        <taxon>Magnoliopsida</taxon>
        <taxon>eudicotyledons</taxon>
        <taxon>Gunneridae</taxon>
        <taxon>Pentapetalae</taxon>
        <taxon>rosids</taxon>
        <taxon>malvids</taxon>
        <taxon>Brassicales</taxon>
        <taxon>Brassicaceae</taxon>
        <taxon>Camelineae</taxon>
        <taxon>Arabidopsis</taxon>
    </lineage>
</organism>
<dbReference type="EMBL" id="AB053952">
    <property type="protein sequence ID" value="BAB55460.1"/>
    <property type="molecule type" value="mRNA"/>
</dbReference>
<dbReference type="EMBL" id="AF360372">
    <property type="protein sequence ID" value="AAK39554.1"/>
    <property type="molecule type" value="mRNA"/>
</dbReference>
<dbReference type="EMBL" id="AC005142">
    <property type="protein sequence ID" value="AAD15312.1"/>
    <property type="status" value="ALT_SEQ"/>
    <property type="molecule type" value="Genomic_DNA"/>
</dbReference>
<dbReference type="EMBL" id="AF071527">
    <property type="protein sequence ID" value="AAD11598.1"/>
    <property type="status" value="ALT_SEQ"/>
    <property type="molecule type" value="Genomic_DNA"/>
</dbReference>
<dbReference type="EMBL" id="AL161497">
    <property type="protein sequence ID" value="CAB77841.1"/>
    <property type="status" value="ALT_SEQ"/>
    <property type="molecule type" value="Genomic_DNA"/>
</dbReference>
<dbReference type="EMBL" id="CP002687">
    <property type="protein sequence ID" value="AEE82337.1"/>
    <property type="molecule type" value="Genomic_DNA"/>
</dbReference>
<dbReference type="PIR" id="B85045">
    <property type="entry name" value="B85045"/>
</dbReference>
<dbReference type="RefSeq" id="NP_567258.1">
    <property type="nucleotide sequence ID" value="NM_116594.5"/>
</dbReference>
<dbReference type="PDB" id="5DQQ">
    <property type="method" value="X-ray"/>
    <property type="resolution" value="2.87 A"/>
    <property type="chains" value="A=12-733"/>
</dbReference>
<dbReference type="PDB" id="5E1J">
    <property type="method" value="X-ray"/>
    <property type="resolution" value="3.31 A"/>
    <property type="chains" value="A=1-733"/>
</dbReference>
<dbReference type="PDB" id="5TUA">
    <property type="method" value="X-ray"/>
    <property type="resolution" value="3.30 A"/>
    <property type="chains" value="A=1-733"/>
</dbReference>
<dbReference type="PDB" id="6CX0">
    <property type="method" value="X-ray"/>
    <property type="resolution" value="3.50 A"/>
    <property type="chains" value="A=11-733"/>
</dbReference>
<dbReference type="PDB" id="6E1K">
    <property type="method" value="EM"/>
    <property type="resolution" value="3.30 A"/>
    <property type="chains" value="A/B=11-733"/>
</dbReference>
<dbReference type="PDB" id="6E1M">
    <property type="method" value="EM"/>
    <property type="resolution" value="3.30 A"/>
    <property type="chains" value="A/B=11-733"/>
</dbReference>
<dbReference type="PDB" id="6E1P">
    <property type="method" value="EM"/>
    <property type="resolution" value="3.70 A"/>
    <property type="chains" value="A/B=11-733"/>
</dbReference>
<dbReference type="PDB" id="7FHK">
    <property type="method" value="EM"/>
    <property type="resolution" value="3.30 A"/>
    <property type="chains" value="A/C=1-733"/>
</dbReference>
<dbReference type="PDB" id="7FHL">
    <property type="method" value="EM"/>
    <property type="resolution" value="3.10 A"/>
    <property type="chains" value="A/C=1-733"/>
</dbReference>
<dbReference type="PDB" id="7FHN">
    <property type="method" value="EM"/>
    <property type="resolution" value="3.30 A"/>
    <property type="chains" value="A/C=1-733"/>
</dbReference>
<dbReference type="PDB" id="7FHO">
    <property type="method" value="EM"/>
    <property type="resolution" value="2.80 A"/>
    <property type="chains" value="A/C=1-733"/>
</dbReference>
<dbReference type="PDB" id="7TBG">
    <property type="method" value="EM"/>
    <property type="resolution" value="2.50 A"/>
    <property type="chains" value="A/B=1-733"/>
</dbReference>
<dbReference type="PDB" id="7TDD">
    <property type="method" value="EM"/>
    <property type="resolution" value="3.50 A"/>
    <property type="chains" value="A/B=16-690"/>
</dbReference>
<dbReference type="PDB" id="7TDE">
    <property type="method" value="EM"/>
    <property type="resolution" value="3.20 A"/>
    <property type="chains" value="A/B=1-733"/>
</dbReference>
<dbReference type="PDB" id="7TDF">
    <property type="method" value="EM"/>
    <property type="resolution" value="2.70 A"/>
    <property type="chains" value="A/B=1-733"/>
</dbReference>
<dbReference type="PDBsum" id="5DQQ"/>
<dbReference type="PDBsum" id="5E1J"/>
<dbReference type="PDBsum" id="5TUA"/>
<dbReference type="PDBsum" id="6CX0"/>
<dbReference type="PDBsum" id="6E1K"/>
<dbReference type="PDBsum" id="6E1M"/>
<dbReference type="PDBsum" id="6E1P"/>
<dbReference type="PDBsum" id="7FHK"/>
<dbReference type="PDBsum" id="7FHL"/>
<dbReference type="PDBsum" id="7FHN"/>
<dbReference type="PDBsum" id="7FHO"/>
<dbReference type="PDBsum" id="7TBG"/>
<dbReference type="PDBsum" id="7TDD"/>
<dbReference type="PDBsum" id="7TDE"/>
<dbReference type="PDBsum" id="7TDF"/>
<dbReference type="EMDB" id="EMD-25798"/>
<dbReference type="EMDB" id="EMD-25825"/>
<dbReference type="EMDB" id="EMD-25826"/>
<dbReference type="EMDB" id="EMD-25827"/>
<dbReference type="EMDB" id="EMD-8956"/>
<dbReference type="EMDB" id="EMD-8957"/>
<dbReference type="EMDB" id="EMD-8958"/>
<dbReference type="EMDB" id="EMD-8960"/>
<dbReference type="SMR" id="Q94KI8"/>
<dbReference type="BioGRID" id="10969">
    <property type="interactions" value="10"/>
</dbReference>
<dbReference type="DIP" id="DIP-39873N"/>
<dbReference type="FunCoup" id="Q94KI8">
    <property type="interactions" value="1219"/>
</dbReference>
<dbReference type="IntAct" id="Q94KI8">
    <property type="interactions" value="9"/>
</dbReference>
<dbReference type="STRING" id="3702.Q94KI8"/>
<dbReference type="TCDB" id="1.A.1.11.26">
    <property type="family name" value="the voltage-gated ion channel (vic) superfamily"/>
</dbReference>
<dbReference type="iPTMnet" id="Q94KI8"/>
<dbReference type="SwissPalm" id="Q94KI8"/>
<dbReference type="PaxDb" id="3702-AT4G03560.1"/>
<dbReference type="ProteomicsDB" id="232406"/>
<dbReference type="ABCD" id="Q94KI8">
    <property type="antibodies" value="1 sequenced antibody"/>
</dbReference>
<dbReference type="EnsemblPlants" id="AT4G03560.1">
    <property type="protein sequence ID" value="AT4G03560.1"/>
    <property type="gene ID" value="AT4G03560"/>
</dbReference>
<dbReference type="GeneID" id="825655"/>
<dbReference type="Gramene" id="AT4G03560.1">
    <property type="protein sequence ID" value="AT4G03560.1"/>
    <property type="gene ID" value="AT4G03560"/>
</dbReference>
<dbReference type="KEGG" id="ath:AT4G03560"/>
<dbReference type="Araport" id="AT4G03560"/>
<dbReference type="TAIR" id="AT4G03560">
    <property type="gene designation" value="TPC1"/>
</dbReference>
<dbReference type="eggNOG" id="KOG2301">
    <property type="taxonomic scope" value="Eukaryota"/>
</dbReference>
<dbReference type="HOGENOM" id="CLU_426053_0_0_1"/>
<dbReference type="InParanoid" id="Q94KI8"/>
<dbReference type="OMA" id="MCSTAIV"/>
<dbReference type="PhylomeDB" id="Q94KI8"/>
<dbReference type="EvolutionaryTrace" id="Q94KI8"/>
<dbReference type="PRO" id="PR:Q94KI8"/>
<dbReference type="Proteomes" id="UP000006548">
    <property type="component" value="Chromosome 4"/>
</dbReference>
<dbReference type="ExpressionAtlas" id="Q94KI8">
    <property type="expression patterns" value="baseline and differential"/>
</dbReference>
<dbReference type="GO" id="GO:0005829">
    <property type="term" value="C:cytosol"/>
    <property type="evidence" value="ECO:0007005"/>
    <property type="project" value="TAIR"/>
</dbReference>
<dbReference type="GO" id="GO:0005794">
    <property type="term" value="C:Golgi apparatus"/>
    <property type="evidence" value="ECO:0007005"/>
    <property type="project" value="TAIR"/>
</dbReference>
<dbReference type="GO" id="GO:0034702">
    <property type="term" value="C:monoatomic ion channel complex"/>
    <property type="evidence" value="ECO:0007669"/>
    <property type="project" value="UniProtKB-KW"/>
</dbReference>
<dbReference type="GO" id="GO:0000325">
    <property type="term" value="C:plant-type vacuole"/>
    <property type="evidence" value="ECO:0000314"/>
    <property type="project" value="TAIR"/>
</dbReference>
<dbReference type="GO" id="GO:0005886">
    <property type="term" value="C:plasma membrane"/>
    <property type="evidence" value="ECO:0000304"/>
    <property type="project" value="TAIR"/>
</dbReference>
<dbReference type="GO" id="GO:0005774">
    <property type="term" value="C:vacuolar membrane"/>
    <property type="evidence" value="ECO:0000314"/>
    <property type="project" value="TAIR"/>
</dbReference>
<dbReference type="GO" id="GO:0005773">
    <property type="term" value="C:vacuole"/>
    <property type="evidence" value="ECO:0007005"/>
    <property type="project" value="TAIR"/>
</dbReference>
<dbReference type="GO" id="GO:0005509">
    <property type="term" value="F:calcium ion binding"/>
    <property type="evidence" value="ECO:0007669"/>
    <property type="project" value="InterPro"/>
</dbReference>
<dbReference type="GO" id="GO:0042802">
    <property type="term" value="F:identical protein binding"/>
    <property type="evidence" value="ECO:0000353"/>
    <property type="project" value="IntAct"/>
</dbReference>
<dbReference type="GO" id="GO:0005245">
    <property type="term" value="F:voltage-gated calcium channel activity"/>
    <property type="evidence" value="ECO:0000250"/>
    <property type="project" value="TAIR"/>
</dbReference>
<dbReference type="GO" id="GO:0006816">
    <property type="term" value="P:calcium ion transport"/>
    <property type="evidence" value="ECO:0000315"/>
    <property type="project" value="TAIR"/>
</dbReference>
<dbReference type="GO" id="GO:0019722">
    <property type="term" value="P:calcium-mediated signaling"/>
    <property type="evidence" value="ECO:0000315"/>
    <property type="project" value="TAIR"/>
</dbReference>
<dbReference type="GO" id="GO:0080141">
    <property type="term" value="P:regulation of jasmonic acid biosynthetic process"/>
    <property type="evidence" value="ECO:0000315"/>
    <property type="project" value="TAIR"/>
</dbReference>
<dbReference type="GO" id="GO:0010119">
    <property type="term" value="P:regulation of stomatal movement"/>
    <property type="evidence" value="ECO:0000315"/>
    <property type="project" value="TAIR"/>
</dbReference>
<dbReference type="GO" id="GO:0009845">
    <property type="term" value="P:seed germination"/>
    <property type="evidence" value="ECO:0000315"/>
    <property type="project" value="TAIR"/>
</dbReference>
<dbReference type="CDD" id="cd00051">
    <property type="entry name" value="EFh"/>
    <property type="match status" value="1"/>
</dbReference>
<dbReference type="FunFam" id="1.10.287.70:FF:000094">
    <property type="entry name" value="Two pore calcium channel protein 1"/>
    <property type="match status" value="1"/>
</dbReference>
<dbReference type="FunFam" id="1.10.287.70:FF:000129">
    <property type="entry name" value="Two pore calcium channel protein 1"/>
    <property type="match status" value="1"/>
</dbReference>
<dbReference type="FunFam" id="1.20.120.350:FF:000055">
    <property type="entry name" value="Two pore calcium channel protein 1"/>
    <property type="match status" value="1"/>
</dbReference>
<dbReference type="Gene3D" id="1.10.287.70">
    <property type="match status" value="2"/>
</dbReference>
<dbReference type="Gene3D" id="1.10.238.10">
    <property type="entry name" value="EF-hand"/>
    <property type="match status" value="1"/>
</dbReference>
<dbReference type="Gene3D" id="1.20.120.350">
    <property type="entry name" value="Voltage-gated potassium channels. Chain C"/>
    <property type="match status" value="1"/>
</dbReference>
<dbReference type="InterPro" id="IPR011992">
    <property type="entry name" value="EF-hand-dom_pair"/>
</dbReference>
<dbReference type="InterPro" id="IPR002048">
    <property type="entry name" value="EF_hand_dom"/>
</dbReference>
<dbReference type="InterPro" id="IPR005821">
    <property type="entry name" value="Ion_trans_dom"/>
</dbReference>
<dbReference type="InterPro" id="IPR044581">
    <property type="entry name" value="TPC1_plant"/>
</dbReference>
<dbReference type="InterPro" id="IPR027359">
    <property type="entry name" value="Volt_channel_dom_sf"/>
</dbReference>
<dbReference type="PANTHER" id="PTHR46988">
    <property type="entry name" value="TWO PORE CALCIUM CHANNEL PROTEIN 1"/>
    <property type="match status" value="1"/>
</dbReference>
<dbReference type="PANTHER" id="PTHR46988:SF2">
    <property type="entry name" value="TWO PORE CALCIUM CHANNEL PROTEIN 1"/>
    <property type="match status" value="1"/>
</dbReference>
<dbReference type="Pfam" id="PF00520">
    <property type="entry name" value="Ion_trans"/>
    <property type="match status" value="2"/>
</dbReference>
<dbReference type="SMART" id="SM00054">
    <property type="entry name" value="EFh"/>
    <property type="match status" value="2"/>
</dbReference>
<dbReference type="SUPFAM" id="SSF47473">
    <property type="entry name" value="EF-hand"/>
    <property type="match status" value="1"/>
</dbReference>
<dbReference type="SUPFAM" id="SSF81324">
    <property type="entry name" value="Voltage-gated potassium channels"/>
    <property type="match status" value="1"/>
</dbReference>
<dbReference type="PROSITE" id="PS50222">
    <property type="entry name" value="EF_HAND_2"/>
    <property type="match status" value="2"/>
</dbReference>
<proteinExistence type="evidence at protein level"/>
<evidence type="ECO:0000250" key="1"/>
<evidence type="ECO:0000255" key="2"/>
<evidence type="ECO:0000255" key="3">
    <source>
        <dbReference type="PROSITE-ProRule" id="PRU00448"/>
    </source>
</evidence>
<evidence type="ECO:0000256" key="4">
    <source>
        <dbReference type="SAM" id="MobiDB-lite"/>
    </source>
</evidence>
<evidence type="ECO:0000269" key="5">
    <source>
    </source>
</evidence>
<evidence type="ECO:0000269" key="6">
    <source>
    </source>
</evidence>
<evidence type="ECO:0000269" key="7">
    <source>
    </source>
</evidence>
<evidence type="ECO:0000269" key="8">
    <source>
    </source>
</evidence>
<evidence type="ECO:0000269" key="9">
    <source>
    </source>
</evidence>
<evidence type="ECO:0000269" key="10">
    <source>
    </source>
</evidence>
<evidence type="ECO:0000305" key="11"/>
<evidence type="ECO:0007744" key="12">
    <source>
    </source>
</evidence>
<evidence type="ECO:0007829" key="13">
    <source>
        <dbReference type="PDB" id="5DQQ"/>
    </source>
</evidence>
<evidence type="ECO:0007829" key="14">
    <source>
        <dbReference type="PDB" id="5E1J"/>
    </source>
</evidence>
<evidence type="ECO:0007829" key="15">
    <source>
        <dbReference type="PDB" id="5TUA"/>
    </source>
</evidence>
<evidence type="ECO:0007829" key="16">
    <source>
        <dbReference type="PDB" id="6E1K"/>
    </source>
</evidence>
<evidence type="ECO:0007829" key="17">
    <source>
        <dbReference type="PDB" id="7FHL"/>
    </source>
</evidence>
<evidence type="ECO:0007829" key="18">
    <source>
        <dbReference type="PDB" id="7FHO"/>
    </source>
</evidence>
<evidence type="ECO:0007829" key="19">
    <source>
        <dbReference type="PDB" id="7TBG"/>
    </source>
</evidence>
<evidence type="ECO:0007829" key="20">
    <source>
        <dbReference type="PDB" id="7TDE"/>
    </source>
</evidence>
<evidence type="ECO:0007829" key="21">
    <source>
        <dbReference type="PDB" id="7TDF"/>
    </source>
</evidence>
<comment type="function">
    <text evidence="6 7">Functions as a voltage-gated inward-rectifying Ca(2+) channel (VDCC) across the vacuole membrane. Is one of the essential components of the slow vacuolar (SV) channel. Acts as the major ROS-responsive Ca(2+) channel and is the possible target of Al-dependent inhibition. Involved in the regulation of germination and stomatal movement.</text>
</comment>
<comment type="activity regulation">
    <text>Inhibited by Al(3+).</text>
</comment>
<comment type="subunit">
    <text evidence="1">Homodimer.</text>
</comment>
<comment type="interaction">
    <interactant intactId="EBI-1552909">
        <id>Q94KI8</id>
    </interactant>
    <interactant intactId="EBI-1552909">
        <id>Q94KI8</id>
        <label>TPC1</label>
    </interactant>
    <organismsDiffer>false</organismsDiffer>
    <experiments>2</experiments>
</comment>
<comment type="subcellular location">
    <subcellularLocation>
        <location evidence="7 8">Vacuole membrane</location>
        <topology evidence="2 7">Multi-pass membrane protein</topology>
    </subcellularLocation>
</comment>
<comment type="tissue specificity">
    <text evidence="5">Ubiquitously expressed.</text>
</comment>
<comment type="domain">
    <text evidence="1">Each of the two internal repeats contains five hydrophobic transmembrane segments (S1, S2, S3, S5, S6) and one positively charged transmembrane segment (S4). S4 segments probably represent the voltage-sensor and are characterized by a series of positively charged amino acids (By similarity).</text>
</comment>
<comment type="disruption phenotype">
    <text evidence="7">Plants display an impairment of both the Ca(2+) inhibition of stomatal guard cell opening and abscisic acid (ABA) inhibition of seed germination.</text>
</comment>
<comment type="similarity">
    <text evidence="11">Belongs to the calcium channel alpha-1 subunit (TC 1.A.1.11) family. Two pore calcium channel subfamily.</text>
</comment>
<comment type="sequence caution" evidence="11">
    <conflict type="erroneous gene model prediction">
        <sequence resource="EMBL-CDS" id="AAD11598"/>
    </conflict>
</comment>
<comment type="sequence caution" evidence="11">
    <conflict type="erroneous gene model prediction">
        <sequence resource="EMBL-CDS" id="AAD15312"/>
    </conflict>
</comment>
<comment type="sequence caution" evidence="11">
    <conflict type="erroneous gene model prediction">
        <sequence resource="EMBL-CDS" id="CAB77841"/>
    </conflict>
</comment>
<reference key="1">
    <citation type="journal article" date="2001" name="Plant Cell Physiol.">
        <title>A putative two pore channel AtTPC1 mediates Ca(2+) flux in Arabidopsis leaf cells.</title>
        <authorList>
            <person name="Furuichi T."/>
            <person name="Cunningham K.W."/>
            <person name="Muto S."/>
        </authorList>
    </citation>
    <scope>NUCLEOTIDE SEQUENCE [MRNA]</scope>
    <scope>CHARACTERIZATION</scope>
    <scope>TISSUE SPECIFICITY</scope>
    <source>
        <tissue>Leaf</tissue>
    </source>
</reference>
<reference key="2">
    <citation type="journal article" date="2005" name="Nature">
        <title>The vacuolar Ca(2+)-activated channel TPC1 regulates germination and stomatal movement.</title>
        <authorList>
            <person name="Peiter E."/>
            <person name="Maathuis F.J.M."/>
            <person name="Mills L.N."/>
            <person name="Knight H."/>
            <person name="Pelloux J."/>
            <person name="Hetherington A.M."/>
            <person name="Sanders D."/>
        </authorList>
    </citation>
    <scope>NUCLEOTIDE SEQUENCE [MRNA]</scope>
    <scope>FUNCTION</scope>
    <scope>SUBCELLULAR LOCATION</scope>
    <scope>DISRUPTION PHENOTYPE</scope>
</reference>
<reference key="3">
    <citation type="journal article" date="1999" name="Nature">
        <title>Sequence and analysis of chromosome 4 of the plant Arabidopsis thaliana.</title>
        <authorList>
            <person name="Mayer K.F.X."/>
            <person name="Schueller C."/>
            <person name="Wambutt R."/>
            <person name="Murphy G."/>
            <person name="Volckaert G."/>
            <person name="Pohl T."/>
            <person name="Duesterhoeft A."/>
            <person name="Stiekema W."/>
            <person name="Entian K.-D."/>
            <person name="Terryn N."/>
            <person name="Harris B."/>
            <person name="Ansorge W."/>
            <person name="Brandt P."/>
            <person name="Grivell L.A."/>
            <person name="Rieger M."/>
            <person name="Weichselgartner M."/>
            <person name="de Simone V."/>
            <person name="Obermaier B."/>
            <person name="Mache R."/>
            <person name="Mueller M."/>
            <person name="Kreis M."/>
            <person name="Delseny M."/>
            <person name="Puigdomenech P."/>
            <person name="Watson M."/>
            <person name="Schmidtheini T."/>
            <person name="Reichert B."/>
            <person name="Portetelle D."/>
            <person name="Perez-Alonso M."/>
            <person name="Boutry M."/>
            <person name="Bancroft I."/>
            <person name="Vos P."/>
            <person name="Hoheisel J."/>
            <person name="Zimmermann W."/>
            <person name="Wedler H."/>
            <person name="Ridley P."/>
            <person name="Langham S.-A."/>
            <person name="McCullagh B."/>
            <person name="Bilham L."/>
            <person name="Robben J."/>
            <person name="van der Schueren J."/>
            <person name="Grymonprez B."/>
            <person name="Chuang Y.-J."/>
            <person name="Vandenbussche F."/>
            <person name="Braeken M."/>
            <person name="Weltjens I."/>
            <person name="Voet M."/>
            <person name="Bastiaens I."/>
            <person name="Aert R."/>
            <person name="Defoor E."/>
            <person name="Weitzenegger T."/>
            <person name="Bothe G."/>
            <person name="Ramsperger U."/>
            <person name="Hilbert H."/>
            <person name="Braun M."/>
            <person name="Holzer E."/>
            <person name="Brandt A."/>
            <person name="Peters S."/>
            <person name="van Staveren M."/>
            <person name="Dirkse W."/>
            <person name="Mooijman P."/>
            <person name="Klein Lankhorst R."/>
            <person name="Rose M."/>
            <person name="Hauf J."/>
            <person name="Koetter P."/>
            <person name="Berneiser S."/>
            <person name="Hempel S."/>
            <person name="Feldpausch M."/>
            <person name="Lamberth S."/>
            <person name="Van den Daele H."/>
            <person name="De Keyser A."/>
            <person name="Buysshaert C."/>
            <person name="Gielen J."/>
            <person name="Villarroel R."/>
            <person name="De Clercq R."/>
            <person name="van Montagu M."/>
            <person name="Rogers J."/>
            <person name="Cronin A."/>
            <person name="Quail M.A."/>
            <person name="Bray-Allen S."/>
            <person name="Clark L."/>
            <person name="Doggett J."/>
            <person name="Hall S."/>
            <person name="Kay M."/>
            <person name="Lennard N."/>
            <person name="McLay K."/>
            <person name="Mayes R."/>
            <person name="Pettett A."/>
            <person name="Rajandream M.A."/>
            <person name="Lyne M."/>
            <person name="Benes V."/>
            <person name="Rechmann S."/>
            <person name="Borkova D."/>
            <person name="Bloecker H."/>
            <person name="Scharfe M."/>
            <person name="Grimm M."/>
            <person name="Loehnert T.-H."/>
            <person name="Dose S."/>
            <person name="de Haan M."/>
            <person name="Maarse A.C."/>
            <person name="Schaefer M."/>
            <person name="Mueller-Auer S."/>
            <person name="Gabel C."/>
            <person name="Fuchs M."/>
            <person name="Fartmann B."/>
            <person name="Granderath K."/>
            <person name="Dauner D."/>
            <person name="Herzl A."/>
            <person name="Neumann S."/>
            <person name="Argiriou A."/>
            <person name="Vitale D."/>
            <person name="Liguori R."/>
            <person name="Piravandi E."/>
            <person name="Massenet O."/>
            <person name="Quigley F."/>
            <person name="Clabauld G."/>
            <person name="Muendlein A."/>
            <person name="Felber R."/>
            <person name="Schnabl S."/>
            <person name="Hiller R."/>
            <person name="Schmidt W."/>
            <person name="Lecharny A."/>
            <person name="Aubourg S."/>
            <person name="Chefdor F."/>
            <person name="Cooke R."/>
            <person name="Berger C."/>
            <person name="Monfort A."/>
            <person name="Casacuberta E."/>
            <person name="Gibbons T."/>
            <person name="Weber N."/>
            <person name="Vandenbol M."/>
            <person name="Bargues M."/>
            <person name="Terol J."/>
            <person name="Torres A."/>
            <person name="Perez-Perez A."/>
            <person name="Purnelle B."/>
            <person name="Bent E."/>
            <person name="Johnson S."/>
            <person name="Tacon D."/>
            <person name="Jesse T."/>
            <person name="Heijnen L."/>
            <person name="Schwarz S."/>
            <person name="Scholler P."/>
            <person name="Heber S."/>
            <person name="Francs P."/>
            <person name="Bielke C."/>
            <person name="Frishman D."/>
            <person name="Haase D."/>
            <person name="Lemcke K."/>
            <person name="Mewes H.-W."/>
            <person name="Stocker S."/>
            <person name="Zaccaria P."/>
            <person name="Bevan M."/>
            <person name="Wilson R.K."/>
            <person name="de la Bastide M."/>
            <person name="Habermann K."/>
            <person name="Parnell L."/>
            <person name="Dedhia N."/>
            <person name="Gnoj L."/>
            <person name="Schutz K."/>
            <person name="Huang E."/>
            <person name="Spiegel L."/>
            <person name="Sekhon M."/>
            <person name="Murray J."/>
            <person name="Sheet P."/>
            <person name="Cordes M."/>
            <person name="Abu-Threideh J."/>
            <person name="Stoneking T."/>
            <person name="Kalicki J."/>
            <person name="Graves T."/>
            <person name="Harmon G."/>
            <person name="Edwards J."/>
            <person name="Latreille P."/>
            <person name="Courtney L."/>
            <person name="Cloud J."/>
            <person name="Abbott A."/>
            <person name="Scott K."/>
            <person name="Johnson D."/>
            <person name="Minx P."/>
            <person name="Bentley D."/>
            <person name="Fulton B."/>
            <person name="Miller N."/>
            <person name="Greco T."/>
            <person name="Kemp K."/>
            <person name="Kramer J."/>
            <person name="Fulton L."/>
            <person name="Mardis E."/>
            <person name="Dante M."/>
            <person name="Pepin K."/>
            <person name="Hillier L.W."/>
            <person name="Nelson J."/>
            <person name="Spieth J."/>
            <person name="Ryan E."/>
            <person name="Andrews S."/>
            <person name="Geisel C."/>
            <person name="Layman D."/>
            <person name="Du H."/>
            <person name="Ali J."/>
            <person name="Berghoff A."/>
            <person name="Jones K."/>
            <person name="Drone K."/>
            <person name="Cotton M."/>
            <person name="Joshu C."/>
            <person name="Antonoiu B."/>
            <person name="Zidanic M."/>
            <person name="Strong C."/>
            <person name="Sun H."/>
            <person name="Lamar B."/>
            <person name="Yordan C."/>
            <person name="Ma P."/>
            <person name="Zhong J."/>
            <person name="Preston R."/>
            <person name="Vil D."/>
            <person name="Shekher M."/>
            <person name="Matero A."/>
            <person name="Shah R."/>
            <person name="Swaby I.K."/>
            <person name="O'Shaughnessy A."/>
            <person name="Rodriguez M."/>
            <person name="Hoffman J."/>
            <person name="Till S."/>
            <person name="Granat S."/>
            <person name="Shohdy N."/>
            <person name="Hasegawa A."/>
            <person name="Hameed A."/>
            <person name="Lodhi M."/>
            <person name="Johnson A."/>
            <person name="Chen E."/>
            <person name="Marra M.A."/>
            <person name="Martienssen R."/>
            <person name="McCombie W.R."/>
        </authorList>
    </citation>
    <scope>NUCLEOTIDE SEQUENCE [LARGE SCALE GENOMIC DNA]</scope>
    <source>
        <strain>cv. Columbia</strain>
    </source>
</reference>
<reference key="4">
    <citation type="journal article" date="2017" name="Plant J.">
        <title>Araport11: a complete reannotation of the Arabidopsis thaliana reference genome.</title>
        <authorList>
            <person name="Cheng C.Y."/>
            <person name="Krishnakumar V."/>
            <person name="Chan A.P."/>
            <person name="Thibaud-Nissen F."/>
            <person name="Schobel S."/>
            <person name="Town C.D."/>
        </authorList>
    </citation>
    <scope>GENOME REANNOTATION</scope>
    <source>
        <strain>cv. Columbia</strain>
    </source>
</reference>
<reference key="5">
    <citation type="journal article" date="2002" name="Biochim. Biophys. Acta">
        <title>Genes for calcium-permeable channels in the plasma membrane of plant root cells.</title>
        <authorList>
            <person name="White P.J."/>
            <person name="Bowen H.C."/>
            <person name="Demidchik V."/>
            <person name="Nichols C."/>
            <person name="Davies J.M."/>
        </authorList>
    </citation>
    <scope>REVIEW</scope>
</reference>
<reference key="6">
    <citation type="journal article" date="2004" name="Biochem. Biophys. Res. Commun.">
        <title>Aluminum as a specific inhibitor of plant TPC1 Ca(2+) channels.</title>
        <authorList>
            <person name="Kawano T."/>
            <person name="Kadono T."/>
            <person name="Fumoto K."/>
            <person name="Lapeyrie F."/>
            <person name="Kuse M."/>
            <person name="Isobe M."/>
            <person name="Furuichi T."/>
            <person name="Muto S."/>
        </authorList>
    </citation>
    <scope>FUNCTION</scope>
</reference>
<reference key="7">
    <citation type="journal article" date="2007" name="J. Exp. Bot.">
        <title>Vacuolar calcium channels.</title>
        <authorList>
            <person name="Pottosin I.I."/>
            <person name="Schoenknecht G."/>
        </authorList>
    </citation>
    <scope>REVIEW</scope>
</reference>
<reference key="8">
    <citation type="journal article" date="2007" name="Mol. Cell. Proteomics">
        <title>A proteomics dissection of Arabidopsis thaliana vacuoles isolated from cell culture.</title>
        <authorList>
            <person name="Jaquinod M."/>
            <person name="Villiers F."/>
            <person name="Kieffer-Jaquinod S."/>
            <person name="Hugouvieux V."/>
            <person name="Bruley C."/>
            <person name="Garin J."/>
            <person name="Bourguignon J."/>
        </authorList>
    </citation>
    <scope>IDENTIFICATION BY MASS SPECTROMETRY</scope>
    <scope>SUBCELLULAR LOCATION [LARGE SCALE ANALYSIS]</scope>
</reference>
<reference key="9">
    <citation type="journal article" date="2007" name="Plant Cell Physiol.">
        <title>The fou2 gain-of-function allele and the wild-type allele of two pore channel 1 contribute to different extents or by different mechanisms to defense gene expression in Arabidopsis.</title>
        <authorList>
            <person name="Bonaventure G."/>
            <person name="Gfeller A."/>
            <person name="Rodriguez V.M."/>
            <person name="Armand F."/>
            <person name="Farmer E.E."/>
        </authorList>
    </citation>
    <scope>MUTAGENESIS OF ASP-454</scope>
</reference>
<reference key="10">
    <citation type="journal article" date="2007" name="Plant J.">
        <title>A gain-of-function allele of TPC1 activates oxylipin biogenesis after leaf wounding in Arabidopsis.</title>
        <authorList>
            <person name="Bonaventure G."/>
            <person name="Gfeller A."/>
            <person name="Proebsting W.M."/>
            <person name="Hoertensteiner S."/>
            <person name="Chetelat A."/>
            <person name="Martinoia E."/>
            <person name="Farmer E.E."/>
        </authorList>
    </citation>
    <scope>MUTAGENESIS OF ASP-454</scope>
</reference>
<reference key="11">
    <citation type="journal article" date="2012" name="Mol. Cell. Proteomics">
        <title>Comparative large-scale characterisation of plant vs. mammal proteins reveals similar and idiosyncratic N-alpha acetylation features.</title>
        <authorList>
            <person name="Bienvenut W.V."/>
            <person name="Sumpton D."/>
            <person name="Martinez A."/>
            <person name="Lilla S."/>
            <person name="Espagne C."/>
            <person name="Meinnel T."/>
            <person name="Giglione C."/>
        </authorList>
    </citation>
    <scope>ACETYLATION [LARGE SCALE ANALYSIS] AT MET-1</scope>
    <scope>IDENTIFICATION BY MASS SPECTROMETRY [LARGE SCALE ANALYSIS]</scope>
</reference>
<feature type="chain" id="PRO_0000343169" description="Two pore calcium channel protein 1">
    <location>
        <begin position="1"/>
        <end position="733"/>
    </location>
</feature>
<feature type="topological domain" description="Cytoplasmic" evidence="2">
    <location>
        <begin position="1"/>
        <end position="71"/>
    </location>
</feature>
<feature type="transmembrane region" description="Helical; Name=S1 of repeat I" evidence="2">
    <location>
        <begin position="72"/>
        <end position="92"/>
    </location>
</feature>
<feature type="topological domain" description="Vacuolar" evidence="2">
    <location>
        <begin position="93"/>
        <end position="120"/>
    </location>
</feature>
<feature type="transmembrane region" description="Helical; Name=S2 of repeat I" evidence="2">
    <location>
        <begin position="121"/>
        <end position="141"/>
    </location>
</feature>
<feature type="topological domain" description="Cytoplasmic" evidence="2">
    <location>
        <begin position="142"/>
        <end position="158"/>
    </location>
</feature>
<feature type="transmembrane region" description="Helical; Name=S3 of repeat I" evidence="2">
    <location>
        <begin position="159"/>
        <end position="179"/>
    </location>
</feature>
<feature type="topological domain" description="Vacuolar" evidence="2">
    <location>
        <position position="180"/>
    </location>
</feature>
<feature type="transmembrane region" description="Helical; Voltage-sensor; Name=S4 of repeat I" evidence="2">
    <location>
        <begin position="181"/>
        <end position="199"/>
    </location>
</feature>
<feature type="topological domain" description="Cytoplasmic" evidence="2">
    <location>
        <begin position="200"/>
        <end position="218"/>
    </location>
</feature>
<feature type="transmembrane region" description="Helical; Name=S5 of repeat I" evidence="2">
    <location>
        <begin position="219"/>
        <end position="239"/>
    </location>
</feature>
<feature type="topological domain" description="Vacuolar" evidence="2">
    <location>
        <begin position="240"/>
        <end position="245"/>
    </location>
</feature>
<feature type="intramembrane region" description="Pore-forming; Name=Pore-forming 1">
    <location>
        <begin position="246"/>
        <end position="260"/>
    </location>
</feature>
<feature type="topological domain" description="Vacuolar" evidence="2">
    <location>
        <begin position="261"/>
        <end position="282"/>
    </location>
</feature>
<feature type="transmembrane region" description="Helical; Name=S6 of repeat I" evidence="2">
    <location>
        <begin position="283"/>
        <end position="303"/>
    </location>
</feature>
<feature type="topological domain" description="Cytoplasmic" evidence="2">
    <location>
        <begin position="304"/>
        <end position="428"/>
    </location>
</feature>
<feature type="transmembrane region" description="Helical; Name=S1 of repeat II" evidence="2">
    <location>
        <begin position="429"/>
        <end position="449"/>
    </location>
</feature>
<feature type="topological domain" description="Vacuolar" evidence="2">
    <location>
        <begin position="450"/>
        <end position="465"/>
    </location>
</feature>
<feature type="transmembrane region" description="Helical; Name=S2 of repeat II" evidence="2">
    <location>
        <begin position="466"/>
        <end position="486"/>
    </location>
</feature>
<feature type="topological domain" description="Cytoplasmic" evidence="2">
    <location>
        <begin position="487"/>
        <end position="498"/>
    </location>
</feature>
<feature type="transmembrane region" description="Helical; Name=S3 of repeat II" evidence="2">
    <location>
        <begin position="499"/>
        <end position="519"/>
    </location>
</feature>
<feature type="topological domain" description="Vacuolar" evidence="2">
    <location>
        <begin position="520"/>
        <end position="528"/>
    </location>
</feature>
<feature type="transmembrane region" description="Helical; Voltage-sensor; Name=S4 of repeat II" evidence="2">
    <location>
        <begin position="529"/>
        <end position="546"/>
    </location>
</feature>
<feature type="topological domain" description="Cytoplasmic" evidence="2">
    <location>
        <begin position="547"/>
        <end position="557"/>
    </location>
</feature>
<feature type="transmembrane region" description="Helical; Name=S5 of repeat II" evidence="2">
    <location>
        <begin position="558"/>
        <end position="578"/>
    </location>
</feature>
<feature type="topological domain" description="Vacuolar" evidence="2">
    <location>
        <begin position="579"/>
        <end position="615"/>
    </location>
</feature>
<feature type="intramembrane region" description="Pore-forming; Name=Pore-forming 2">
    <location>
        <begin position="616"/>
        <end position="630"/>
    </location>
</feature>
<feature type="topological domain" description="Vacuolar" evidence="2">
    <location>
        <begin position="631"/>
        <end position="651"/>
    </location>
</feature>
<feature type="transmembrane region" description="Helical; Name=S6 of repeat II" evidence="2">
    <location>
        <begin position="652"/>
        <end position="672"/>
    </location>
</feature>
<feature type="topological domain" description="Cytoplasmic" evidence="2">
    <location>
        <begin position="673"/>
        <end position="733"/>
    </location>
</feature>
<feature type="domain" description="EF-hand 1" evidence="3">
    <location>
        <begin position="322"/>
        <end position="357"/>
    </location>
</feature>
<feature type="domain" description="EF-hand 2" evidence="3">
    <location>
        <begin position="363"/>
        <end position="398"/>
    </location>
</feature>
<feature type="region of interest" description="Disordered" evidence="4">
    <location>
        <begin position="686"/>
        <end position="711"/>
    </location>
</feature>
<feature type="compositionally biased region" description="Basic and acidic residues" evidence="4">
    <location>
        <begin position="686"/>
        <end position="695"/>
    </location>
</feature>
<feature type="modified residue" description="N-acetylmethionine" evidence="12">
    <location>
        <position position="1"/>
    </location>
</feature>
<feature type="mutagenesis site" description="In fou2; shows elevated LOX and AOS activity levels and an increased resistance to B.cinerea. Strongly increases oxylipin biogenesis in response to wounding." evidence="9 10">
    <original>D</original>
    <variation>N</variation>
    <location>
        <position position="454"/>
    </location>
</feature>
<feature type="sequence conflict" description="In Ref. 1; BAB55460." evidence="11" ref="1">
    <original>K</original>
    <variation>R</variation>
    <location>
        <position position="33"/>
    </location>
</feature>
<feature type="sequence conflict" description="In Ref. 1; BAB55460." evidence="11" ref="1">
    <original>Y</original>
    <variation>F</variation>
    <location>
        <position position="256"/>
    </location>
</feature>
<feature type="sequence conflict" description="In Ref. 1; BAB55460." evidence="11" ref="1">
    <original>N</original>
    <variation>T</variation>
    <location>
        <position position="612"/>
    </location>
</feature>
<feature type="helix" evidence="19">
    <location>
        <begin position="22"/>
        <end position="27"/>
    </location>
</feature>
<feature type="helix" evidence="19">
    <location>
        <begin position="30"/>
        <end position="42"/>
    </location>
</feature>
<feature type="helix" evidence="19">
    <location>
        <begin position="49"/>
        <end position="52"/>
    </location>
</feature>
<feature type="strand" evidence="21">
    <location>
        <begin position="54"/>
        <end position="56"/>
    </location>
</feature>
<feature type="helix" evidence="19">
    <location>
        <begin position="59"/>
        <end position="69"/>
    </location>
</feature>
<feature type="helix" evidence="19">
    <location>
        <begin position="71"/>
        <end position="83"/>
    </location>
</feature>
<feature type="helix" evidence="19">
    <location>
        <begin position="84"/>
        <end position="87"/>
    </location>
</feature>
<feature type="helix" evidence="19">
    <location>
        <begin position="91"/>
        <end position="94"/>
    </location>
</feature>
<feature type="strand" evidence="14">
    <location>
        <begin position="95"/>
        <end position="97"/>
    </location>
</feature>
<feature type="strand" evidence="13">
    <location>
        <begin position="98"/>
        <end position="102"/>
    </location>
</feature>
<feature type="turn" evidence="19">
    <location>
        <begin position="104"/>
        <end position="108"/>
    </location>
</feature>
<feature type="helix" evidence="19">
    <location>
        <begin position="117"/>
        <end position="136"/>
    </location>
</feature>
<feature type="helix" evidence="19">
    <location>
        <begin position="137"/>
        <end position="140"/>
    </location>
</feature>
<feature type="helix" evidence="19">
    <location>
        <begin position="144"/>
        <end position="149"/>
    </location>
</feature>
<feature type="helix" evidence="19">
    <location>
        <begin position="151"/>
        <end position="171"/>
    </location>
</feature>
<feature type="turn" evidence="20">
    <location>
        <begin position="176"/>
        <end position="178"/>
    </location>
</feature>
<feature type="helix" evidence="19">
    <location>
        <begin position="187"/>
        <end position="198"/>
    </location>
</feature>
<feature type="helix" evidence="19">
    <location>
        <begin position="200"/>
        <end position="237"/>
    </location>
</feature>
<feature type="strand" evidence="18">
    <location>
        <begin position="239"/>
        <end position="241"/>
    </location>
</feature>
<feature type="helix" evidence="19">
    <location>
        <begin position="242"/>
        <end position="246"/>
    </location>
</feature>
<feature type="helix" evidence="19">
    <location>
        <begin position="251"/>
        <end position="262"/>
    </location>
</feature>
<feature type="turn" evidence="19">
    <location>
        <begin position="263"/>
        <end position="268"/>
    </location>
</feature>
<feature type="helix" evidence="19">
    <location>
        <begin position="269"/>
        <end position="271"/>
    </location>
</feature>
<feature type="helix" evidence="19">
    <location>
        <begin position="272"/>
        <end position="277"/>
    </location>
</feature>
<feature type="helix" evidence="19">
    <location>
        <begin position="281"/>
        <end position="294"/>
    </location>
</feature>
<feature type="helix" evidence="19">
    <location>
        <begin position="296"/>
        <end position="334"/>
    </location>
</feature>
<feature type="turn" evidence="19">
    <location>
        <begin position="335"/>
        <end position="337"/>
    </location>
</feature>
<feature type="strand" evidence="21">
    <location>
        <begin position="340"/>
        <end position="342"/>
    </location>
</feature>
<feature type="helix" evidence="19">
    <location>
        <begin position="344"/>
        <end position="355"/>
    </location>
</feature>
<feature type="turn" evidence="16">
    <location>
        <begin position="361"/>
        <end position="363"/>
    </location>
</feature>
<feature type="helix" evidence="18">
    <location>
        <begin position="367"/>
        <end position="375"/>
    </location>
</feature>
<feature type="strand" evidence="15">
    <location>
        <begin position="377"/>
        <end position="379"/>
    </location>
</feature>
<feature type="strand" evidence="18">
    <location>
        <begin position="380"/>
        <end position="384"/>
    </location>
</feature>
<feature type="helix" evidence="19">
    <location>
        <begin position="385"/>
        <end position="398"/>
    </location>
</feature>
<feature type="helix" evidence="18">
    <location>
        <begin position="407"/>
        <end position="409"/>
    </location>
</feature>
<feature type="turn" evidence="18">
    <location>
        <begin position="412"/>
        <end position="414"/>
    </location>
</feature>
<feature type="helix" evidence="18">
    <location>
        <begin position="418"/>
        <end position="428"/>
    </location>
</feature>
<feature type="helix" evidence="19">
    <location>
        <begin position="430"/>
        <end position="451"/>
    </location>
</feature>
<feature type="turn" evidence="15">
    <location>
        <begin position="455"/>
        <end position="457"/>
    </location>
</feature>
<feature type="turn" evidence="20">
    <location>
        <begin position="460"/>
        <end position="463"/>
    </location>
</feature>
<feature type="helix" evidence="19">
    <location>
        <begin position="465"/>
        <end position="486"/>
    </location>
</feature>
<feature type="helix" evidence="19">
    <location>
        <begin position="488"/>
        <end position="491"/>
    </location>
</feature>
<feature type="helix" evidence="19">
    <location>
        <begin position="495"/>
        <end position="510"/>
    </location>
</feature>
<feature type="turn" evidence="18">
    <location>
        <begin position="522"/>
        <end position="524"/>
    </location>
</feature>
<feature type="turn" evidence="15">
    <location>
        <begin position="525"/>
        <end position="527"/>
    </location>
</feature>
<feature type="helix" evidence="19">
    <location>
        <begin position="530"/>
        <end position="538"/>
    </location>
</feature>
<feature type="helix" evidence="19">
    <location>
        <begin position="539"/>
        <end position="547"/>
    </location>
</feature>
<feature type="helix" evidence="19">
    <location>
        <begin position="549"/>
        <end position="564"/>
    </location>
</feature>
<feature type="helix" evidence="19">
    <location>
        <begin position="566"/>
        <end position="587"/>
    </location>
</feature>
<feature type="strand" evidence="17">
    <location>
        <begin position="588"/>
        <end position="590"/>
    </location>
</feature>
<feature type="helix" evidence="19">
    <location>
        <begin position="598"/>
        <end position="600"/>
    </location>
</feature>
<feature type="turn" evidence="19">
    <location>
        <begin position="603"/>
        <end position="607"/>
    </location>
</feature>
<feature type="strand" evidence="19">
    <location>
        <begin position="611"/>
        <end position="615"/>
    </location>
</feature>
<feature type="helix" evidence="19">
    <location>
        <begin position="616"/>
        <end position="627"/>
    </location>
</feature>
<feature type="turn" evidence="19">
    <location>
        <begin position="628"/>
        <end position="632"/>
    </location>
</feature>
<feature type="helix" evidence="19">
    <location>
        <begin position="633"/>
        <end position="643"/>
    </location>
</feature>
<feature type="helix" evidence="19">
    <location>
        <begin position="646"/>
        <end position="648"/>
    </location>
</feature>
<feature type="helix" evidence="19">
    <location>
        <begin position="649"/>
        <end position="659"/>
    </location>
</feature>
<feature type="turn" evidence="19">
    <location>
        <begin position="660"/>
        <end position="662"/>
    </location>
</feature>
<feature type="helix" evidence="19">
    <location>
        <begin position="663"/>
        <end position="685"/>
    </location>
</feature>
<feature type="helix" evidence="16">
    <location>
        <begin position="698"/>
        <end position="703"/>
    </location>
</feature>
<accession>Q94KI8</accession>
<accession>Q948T1</accession>
<accession>Q9ZT83</accession>
<name>TPC1_ARATH</name>
<keyword id="KW-0002">3D-structure</keyword>
<keyword id="KW-0007">Acetylation</keyword>
<keyword id="KW-0106">Calcium</keyword>
<keyword id="KW-0107">Calcium channel</keyword>
<keyword id="KW-0109">Calcium transport</keyword>
<keyword id="KW-0407">Ion channel</keyword>
<keyword id="KW-0406">Ion transport</keyword>
<keyword id="KW-0472">Membrane</keyword>
<keyword id="KW-1185">Reference proteome</keyword>
<keyword id="KW-0677">Repeat</keyword>
<keyword id="KW-0812">Transmembrane</keyword>
<keyword id="KW-1133">Transmembrane helix</keyword>
<keyword id="KW-0813">Transport</keyword>
<keyword id="KW-0926">Vacuole</keyword>
<keyword id="KW-0851">Voltage-gated channel</keyword>
<gene>
    <name type="primary">TPC1</name>
    <name type="synonym">CCH1</name>
    <name type="synonym">FOU2</name>
    <name type="ordered locus">At4g03560</name>
    <name type="ORF">F9H3.19</name>
    <name type="ORF">T5L23.5</name>
</gene>